<name>TOP1P_XYLFA</name>
<proteinExistence type="inferred from homology"/>
<gene>
    <name type="ordered locus">XF_a0003</name>
</gene>
<keyword id="KW-0238">DNA-binding</keyword>
<keyword id="KW-0413">Isomerase</keyword>
<keyword id="KW-0460">Magnesium</keyword>
<keyword id="KW-0479">Metal-binding</keyword>
<keyword id="KW-0614">Plasmid</keyword>
<keyword id="KW-0677">Repeat</keyword>
<keyword id="KW-0799">Topoisomerase</keyword>
<keyword id="KW-0862">Zinc</keyword>
<keyword id="KW-0863">Zinc-finger</keyword>
<feature type="chain" id="PRO_0000145174" description="DNA topoisomerase I, plasmid">
    <location>
        <begin position="1"/>
        <end position="660"/>
    </location>
</feature>
<feature type="domain" description="Toprim" evidence="1">
    <location>
        <begin position="1"/>
        <end position="110"/>
    </location>
</feature>
<feature type="domain" description="Topo IA-type catalytic" evidence="2">
    <location>
        <begin position="124"/>
        <end position="550"/>
    </location>
</feature>
<feature type="zinc finger region" description="C4-type 1">
    <location>
        <begin position="563"/>
        <end position="589"/>
    </location>
</feature>
<feature type="zinc finger region" description="C4-type 2">
    <location>
        <begin position="613"/>
        <end position="643"/>
    </location>
</feature>
<feature type="region of interest" description="Interaction with DNA" evidence="1">
    <location>
        <begin position="158"/>
        <end position="163"/>
    </location>
</feature>
<feature type="active site" description="O-(5'-phospho-DNA)-tyrosine intermediate" evidence="2">
    <location>
        <position position="287"/>
    </location>
</feature>
<feature type="binding site" evidence="1">
    <location>
        <position position="7"/>
    </location>
    <ligand>
        <name>Mg(2+)</name>
        <dbReference type="ChEBI" id="CHEBI:18420"/>
        <note>catalytic</note>
    </ligand>
</feature>
<feature type="binding site" evidence="1">
    <location>
        <position position="79"/>
    </location>
    <ligand>
        <name>Mg(2+)</name>
        <dbReference type="ChEBI" id="CHEBI:18420"/>
        <note>catalytic</note>
    </ligand>
</feature>
<feature type="site" description="Interaction with DNA" evidence="1">
    <location>
        <position position="31"/>
    </location>
</feature>
<feature type="site" description="Interaction with DNA" evidence="1">
    <location>
        <position position="134"/>
    </location>
</feature>
<feature type="site" description="Interaction with DNA" evidence="1">
    <location>
        <position position="135"/>
    </location>
</feature>
<feature type="site" description="Interaction with DNA" evidence="1">
    <location>
        <position position="138"/>
    </location>
</feature>
<feature type="site" description="Interaction with DNA" evidence="1">
    <location>
        <position position="143"/>
    </location>
</feature>
<feature type="site" description="Interaction with DNA" evidence="1">
    <location>
        <position position="289"/>
    </location>
</feature>
<feature type="site" description="Interaction with DNA" evidence="1">
    <location>
        <position position="483"/>
    </location>
</feature>
<organism>
    <name type="scientific">Xylella fastidiosa (strain 9a5c)</name>
    <dbReference type="NCBI Taxonomy" id="160492"/>
    <lineage>
        <taxon>Bacteria</taxon>
        <taxon>Pseudomonadati</taxon>
        <taxon>Pseudomonadota</taxon>
        <taxon>Gammaproteobacteria</taxon>
        <taxon>Lysobacterales</taxon>
        <taxon>Lysobacteraceae</taxon>
        <taxon>Xylella</taxon>
    </lineage>
</organism>
<evidence type="ECO:0000255" key="1">
    <source>
        <dbReference type="HAMAP-Rule" id="MF_00952"/>
    </source>
</evidence>
<evidence type="ECO:0000255" key="2">
    <source>
        <dbReference type="PROSITE-ProRule" id="PRU01383"/>
    </source>
</evidence>
<dbReference type="EC" id="5.6.2.1" evidence="1"/>
<dbReference type="EMBL" id="AE003851">
    <property type="protein sequence ID" value="AAF85572.1"/>
    <property type="molecule type" value="Genomic_DNA"/>
</dbReference>
<dbReference type="PIR" id="C82861">
    <property type="entry name" value="C82861"/>
</dbReference>
<dbReference type="SMR" id="Q9PHK2"/>
<dbReference type="KEGG" id="xfa:XF_a0003"/>
<dbReference type="eggNOG" id="COG0550">
    <property type="taxonomic scope" value="Bacteria"/>
</dbReference>
<dbReference type="HOGENOM" id="CLU_002929_4_3_6"/>
<dbReference type="Proteomes" id="UP000000812">
    <property type="component" value="Plasmid pXF51"/>
</dbReference>
<dbReference type="GO" id="GO:0005694">
    <property type="term" value="C:chromosome"/>
    <property type="evidence" value="ECO:0007669"/>
    <property type="project" value="InterPro"/>
</dbReference>
<dbReference type="GO" id="GO:0003677">
    <property type="term" value="F:DNA binding"/>
    <property type="evidence" value="ECO:0007669"/>
    <property type="project" value="UniProtKB-KW"/>
</dbReference>
<dbReference type="GO" id="GO:0003917">
    <property type="term" value="F:DNA topoisomerase type I (single strand cut, ATP-independent) activity"/>
    <property type="evidence" value="ECO:0007669"/>
    <property type="project" value="UniProtKB-UniRule"/>
</dbReference>
<dbReference type="GO" id="GO:0008270">
    <property type="term" value="F:zinc ion binding"/>
    <property type="evidence" value="ECO:0007669"/>
    <property type="project" value="UniProtKB-KW"/>
</dbReference>
<dbReference type="GO" id="GO:0006265">
    <property type="term" value="P:DNA topological change"/>
    <property type="evidence" value="ECO:0007669"/>
    <property type="project" value="UniProtKB-UniRule"/>
</dbReference>
<dbReference type="CDD" id="cd00186">
    <property type="entry name" value="TOP1Ac"/>
    <property type="match status" value="1"/>
</dbReference>
<dbReference type="CDD" id="cd03363">
    <property type="entry name" value="TOPRIM_TopoIA_TopoI"/>
    <property type="match status" value="1"/>
</dbReference>
<dbReference type="Gene3D" id="3.40.50.140">
    <property type="match status" value="1"/>
</dbReference>
<dbReference type="Gene3D" id="3.30.65.10">
    <property type="entry name" value="Bacterial Topoisomerase I, domain 1"/>
    <property type="match status" value="2"/>
</dbReference>
<dbReference type="Gene3D" id="1.10.460.10">
    <property type="entry name" value="Topoisomerase I, domain 2"/>
    <property type="match status" value="1"/>
</dbReference>
<dbReference type="Gene3D" id="2.70.20.10">
    <property type="entry name" value="Topoisomerase I, domain 3"/>
    <property type="match status" value="1"/>
</dbReference>
<dbReference type="Gene3D" id="1.10.290.10">
    <property type="entry name" value="Topoisomerase I, domain 4"/>
    <property type="match status" value="1"/>
</dbReference>
<dbReference type="HAMAP" id="MF_00952">
    <property type="entry name" value="Topoisom_1_prok"/>
    <property type="match status" value="1"/>
</dbReference>
<dbReference type="InterPro" id="IPR000380">
    <property type="entry name" value="Topo_IA"/>
</dbReference>
<dbReference type="InterPro" id="IPR003601">
    <property type="entry name" value="Topo_IA_2"/>
</dbReference>
<dbReference type="InterPro" id="IPR023406">
    <property type="entry name" value="Topo_IA_AS"/>
</dbReference>
<dbReference type="InterPro" id="IPR013497">
    <property type="entry name" value="Topo_IA_cen"/>
</dbReference>
<dbReference type="InterPro" id="IPR013824">
    <property type="entry name" value="Topo_IA_cen_sub1"/>
</dbReference>
<dbReference type="InterPro" id="IPR013825">
    <property type="entry name" value="Topo_IA_cen_sub2"/>
</dbReference>
<dbReference type="InterPro" id="IPR013826">
    <property type="entry name" value="Topo_IA_cen_sub3"/>
</dbReference>
<dbReference type="InterPro" id="IPR023405">
    <property type="entry name" value="Topo_IA_core_domain"/>
</dbReference>
<dbReference type="InterPro" id="IPR003602">
    <property type="entry name" value="Topo_IA_DNA-bd_dom"/>
</dbReference>
<dbReference type="InterPro" id="IPR013498">
    <property type="entry name" value="Topo_IA_Znf"/>
</dbReference>
<dbReference type="InterPro" id="IPR005733">
    <property type="entry name" value="TopoI_bac-type"/>
</dbReference>
<dbReference type="InterPro" id="IPR028612">
    <property type="entry name" value="Topoisom_1_IA"/>
</dbReference>
<dbReference type="InterPro" id="IPR006171">
    <property type="entry name" value="TOPRIM_dom"/>
</dbReference>
<dbReference type="InterPro" id="IPR034149">
    <property type="entry name" value="TOPRIM_TopoI"/>
</dbReference>
<dbReference type="NCBIfam" id="TIGR01051">
    <property type="entry name" value="topA_bact"/>
    <property type="match status" value="1"/>
</dbReference>
<dbReference type="PANTHER" id="PTHR42785:SF1">
    <property type="entry name" value="DNA TOPOISOMERASE"/>
    <property type="match status" value="1"/>
</dbReference>
<dbReference type="PANTHER" id="PTHR42785">
    <property type="entry name" value="DNA TOPOISOMERASE, TYPE IA, CORE"/>
    <property type="match status" value="1"/>
</dbReference>
<dbReference type="Pfam" id="PF01131">
    <property type="entry name" value="Topoisom_bac"/>
    <property type="match status" value="1"/>
</dbReference>
<dbReference type="Pfam" id="PF01751">
    <property type="entry name" value="Toprim"/>
    <property type="match status" value="1"/>
</dbReference>
<dbReference type="Pfam" id="PF01396">
    <property type="entry name" value="Zn_ribbon_Top1"/>
    <property type="match status" value="2"/>
</dbReference>
<dbReference type="PRINTS" id="PR00417">
    <property type="entry name" value="PRTPISMRASEI"/>
</dbReference>
<dbReference type="SMART" id="SM00437">
    <property type="entry name" value="TOP1Ac"/>
    <property type="match status" value="1"/>
</dbReference>
<dbReference type="SMART" id="SM00436">
    <property type="entry name" value="TOP1Bc"/>
    <property type="match status" value="1"/>
</dbReference>
<dbReference type="SMART" id="SM00493">
    <property type="entry name" value="TOPRIM"/>
    <property type="match status" value="1"/>
</dbReference>
<dbReference type="SUPFAM" id="SSF56712">
    <property type="entry name" value="Prokaryotic type I DNA topoisomerase"/>
    <property type="match status" value="1"/>
</dbReference>
<dbReference type="SUPFAM" id="SSF57783">
    <property type="entry name" value="Zinc beta-ribbon"/>
    <property type="match status" value="1"/>
</dbReference>
<dbReference type="PROSITE" id="PS00396">
    <property type="entry name" value="TOPO_IA_1"/>
    <property type="match status" value="1"/>
</dbReference>
<dbReference type="PROSITE" id="PS52039">
    <property type="entry name" value="TOPO_IA_2"/>
    <property type="match status" value="1"/>
</dbReference>
<dbReference type="PROSITE" id="PS50880">
    <property type="entry name" value="TOPRIM"/>
    <property type="match status" value="1"/>
</dbReference>
<protein>
    <recommendedName>
        <fullName evidence="1">DNA topoisomerase I, plasmid</fullName>
        <ecNumber evidence="1">5.6.2.1</ecNumber>
    </recommendedName>
    <alternativeName>
        <fullName>Omega-protein</fullName>
    </alternativeName>
    <alternativeName>
        <fullName>Relaxing enzyme</fullName>
    </alternativeName>
    <alternativeName>
        <fullName>Swivelase</fullName>
    </alternativeName>
    <alternativeName>
        <fullName>Untwisting enzyme</fullName>
    </alternativeName>
</protein>
<sequence length="660" mass="72556">MKLMIIESPGKIEKLSTILGDGWKIAASVGHVRDLPQKEMGVAAPDFKPSYELTERGEGVVAKLKNLLKQADSVYLATDPDREGEAISWHLQQCLKLSNPLRVTFNEITANAVKASLVAPRTIDVKRVAAQEARRVLDRLVGYMVSPELSRLTGKRLSAGRVQSPAVRLVVEREREIKAFKVTNHFGAMLFFADAKTSGEWSAEWLTKPKFVAEDNPYFMDRDFAAAVAQVKAVVVKSFDESEAKRSPPPPFTTSTMQQAASVTLGVDPKAAMDAAQKLYEQGHITYHRTDNPNVSDESLGDIYAVSVKLGLDIAEKPRKFKAPAGAQVGHPAVTPTHWEVEEAGETSDQKALYKLIRLRAIACQLADARYAVRTVRLEAAQPVGGKNVEFEARGRTLIYQGWLKLIAGDQTEEEDGNEKESSNPIPVCAPGECLDVARGKLLEKKTKPPSHYTQATLVKKLESEGIGRPATYAAIMDNIVSRGYVKTEKKYLFPTETGELIVDSLVGKFEFLDLGFTREIEESLDRIAQGESGYKAVIAKVHDQLNMELSTLQVSATPKHPCQECGKPLRRIPGKNGHFWGCSGYPDCSVTFPDEGGKPGQKKPVEVSNFACVKCGNPLKHLVKKGKGGYDFWGCSGFKEGCKATYEDKKGKPNFEKAK</sequence>
<reference key="1">
    <citation type="journal article" date="2000" name="Nature">
        <title>The genome sequence of the plant pathogen Xylella fastidiosa.</title>
        <authorList>
            <person name="Simpson A.J.G."/>
            <person name="Reinach F.C."/>
            <person name="Arruda P."/>
            <person name="Abreu F.A."/>
            <person name="Acencio M."/>
            <person name="Alvarenga R."/>
            <person name="Alves L.M.C."/>
            <person name="Araya J.E."/>
            <person name="Baia G.S."/>
            <person name="Baptista C.S."/>
            <person name="Barros M.H."/>
            <person name="Bonaccorsi E.D."/>
            <person name="Bordin S."/>
            <person name="Bove J.M."/>
            <person name="Briones M.R.S."/>
            <person name="Bueno M.R.P."/>
            <person name="Camargo A.A."/>
            <person name="Camargo L.E.A."/>
            <person name="Carraro D.M."/>
            <person name="Carrer H."/>
            <person name="Colauto N.B."/>
            <person name="Colombo C."/>
            <person name="Costa F.F."/>
            <person name="Costa M.C.R."/>
            <person name="Costa-Neto C.M."/>
            <person name="Coutinho L.L."/>
            <person name="Cristofani M."/>
            <person name="Dias-Neto E."/>
            <person name="Docena C."/>
            <person name="El-Dorry H."/>
            <person name="Facincani A.P."/>
            <person name="Ferreira A.J.S."/>
            <person name="Ferreira V.C.A."/>
            <person name="Ferro J.A."/>
            <person name="Fraga J.S."/>
            <person name="Franca S.C."/>
            <person name="Franco M.C."/>
            <person name="Frohme M."/>
            <person name="Furlan L.R."/>
            <person name="Garnier M."/>
            <person name="Goldman G.H."/>
            <person name="Goldman M.H.S."/>
            <person name="Gomes S.L."/>
            <person name="Gruber A."/>
            <person name="Ho P.L."/>
            <person name="Hoheisel J.D."/>
            <person name="Junqueira M.L."/>
            <person name="Kemper E.L."/>
            <person name="Kitajima J.P."/>
            <person name="Krieger J.E."/>
            <person name="Kuramae E.E."/>
            <person name="Laigret F."/>
            <person name="Lambais M.R."/>
            <person name="Leite L.C.C."/>
            <person name="Lemos E.G.M."/>
            <person name="Lemos M.V.F."/>
            <person name="Lopes S.A."/>
            <person name="Lopes C.R."/>
            <person name="Machado J.A."/>
            <person name="Machado M.A."/>
            <person name="Madeira A.M.B.N."/>
            <person name="Madeira H.M.F."/>
            <person name="Marino C.L."/>
            <person name="Marques M.V."/>
            <person name="Martins E.A.L."/>
            <person name="Martins E.M.F."/>
            <person name="Matsukuma A.Y."/>
            <person name="Menck C.F.M."/>
            <person name="Miracca E.C."/>
            <person name="Miyaki C.Y."/>
            <person name="Monteiro-Vitorello C.B."/>
            <person name="Moon D.H."/>
            <person name="Nagai M.A."/>
            <person name="Nascimento A.L.T.O."/>
            <person name="Netto L.E.S."/>
            <person name="Nhani A. Jr."/>
            <person name="Nobrega F.G."/>
            <person name="Nunes L.R."/>
            <person name="Oliveira M.A."/>
            <person name="de Oliveira M.C."/>
            <person name="de Oliveira R.C."/>
            <person name="Palmieri D.A."/>
            <person name="Paris A."/>
            <person name="Peixoto B.R."/>
            <person name="Pereira G.A.G."/>
            <person name="Pereira H.A. Jr."/>
            <person name="Pesquero J.B."/>
            <person name="Quaggio R.B."/>
            <person name="Roberto P.G."/>
            <person name="Rodrigues V."/>
            <person name="de Rosa A.J.M."/>
            <person name="de Rosa V.E. Jr."/>
            <person name="de Sa R.G."/>
            <person name="Santelli R.V."/>
            <person name="Sawasaki H.E."/>
            <person name="da Silva A.C.R."/>
            <person name="da Silva A.M."/>
            <person name="da Silva F.R."/>
            <person name="Silva W.A. Jr."/>
            <person name="da Silveira J.F."/>
            <person name="Silvestri M.L.Z."/>
            <person name="Siqueira W.J."/>
            <person name="de Souza A.A."/>
            <person name="de Souza A.P."/>
            <person name="Terenzi M.F."/>
            <person name="Truffi D."/>
            <person name="Tsai S.M."/>
            <person name="Tsuhako M.H."/>
            <person name="Vallada H."/>
            <person name="Van Sluys M.A."/>
            <person name="Verjovski-Almeida S."/>
            <person name="Vettore A.L."/>
            <person name="Zago M.A."/>
            <person name="Zatz M."/>
            <person name="Meidanis J."/>
            <person name="Setubal J.C."/>
        </authorList>
    </citation>
    <scope>NUCLEOTIDE SEQUENCE [LARGE SCALE GENOMIC DNA]</scope>
    <source>
        <strain>9a5c</strain>
    </source>
</reference>
<reference key="2">
    <citation type="journal article" date="2001" name="Plasmid">
        <title>Genetic organization of Plasmid pXF51 from the plant pathogen Xylella fastidiosa.</title>
        <authorList>
            <person name="Marques M.V."/>
            <person name="da Silva A.M."/>
            <person name="Gomes S.L."/>
        </authorList>
    </citation>
    <scope>DISCUSSION OF SEQUENCE</scope>
</reference>
<geneLocation type="plasmid">
    <name>pXF51</name>
</geneLocation>
<comment type="function">
    <text evidence="1">Releases the supercoiling and torsional tension of DNA, which is introduced during the DNA replication and transcription, by transiently cleaving and rejoining one strand of the DNA duplex. Introduces a single-strand break via transesterification at a target site in duplex DNA. The scissile phosphodiester is attacked by the catalytic tyrosine of the enzyme, resulting in the formation of a DNA-(5'-phosphotyrosyl)-enzyme intermediate and the expulsion of a 3'-OH DNA strand. The free DNA strand then undergoes passage around the unbroken strand, thus removing DNA supercoils. Finally, in the religation step, the DNA 3'-OH attacks the covalent intermediate to expel the active-site tyrosine and restore the DNA phosphodiester backbone.</text>
</comment>
<comment type="catalytic activity">
    <reaction evidence="1">
        <text>ATP-independent breakage of single-stranded DNA, followed by passage and rejoining.</text>
        <dbReference type="EC" id="5.6.2.1"/>
    </reaction>
</comment>
<comment type="cofactor">
    <cofactor evidence="1">
        <name>Mg(2+)</name>
        <dbReference type="ChEBI" id="CHEBI:18420"/>
    </cofactor>
</comment>
<comment type="subunit">
    <text evidence="1">Monomer.</text>
</comment>
<comment type="similarity">
    <text evidence="1">Belongs to the type IA topoisomerase family.</text>
</comment>
<accession>Q9PHK2</accession>